<reference key="1">
    <citation type="journal article" date="1985" name="Nucleic Acids Res.">
        <title>Sequence organization of repetitive elements in the flanking regions of the chloroplast ribosomal unit of Chlamydomonas reinhardii.</title>
        <authorList>
            <person name="Schneider M."/>
            <person name="Darlix J.-L."/>
            <person name="Erickson J."/>
            <person name="Rochaix J.-D."/>
        </authorList>
    </citation>
    <scope>NUCLEOTIDE SEQUENCE [GENOMIC DNA]</scope>
</reference>
<reference key="2">
    <citation type="journal article" date="2009" name="BMC Evol. Biol.">
        <title>Nucleotide diversity of the Chlamydomonas reinhardtii plastid genome: addressing the mutational-hazard hypothesis.</title>
        <authorList>
            <person name="Smith D.R."/>
            <person name="Lee R.W."/>
        </authorList>
    </citation>
    <scope>NUCLEOTIDE SEQUENCE [LARGE SCALE GENOMIC DNA]</scope>
    <source>
        <strain>CC-503</strain>
    </source>
</reference>
<reference key="3">
    <citation type="journal article" date="2002" name="Plant Cell">
        <title>The Chlamydomonas reinhardtii plastid chromosome: islands of genes in a sea of repeats.</title>
        <authorList>
            <person name="Maul J.E."/>
            <person name="Lilly J.W."/>
            <person name="Cui L."/>
            <person name="dePamphilis C.W."/>
            <person name="Miller W."/>
            <person name="Harris E.H."/>
            <person name="Stern D.B."/>
        </authorList>
    </citation>
    <scope>IDENTIFICATION</scope>
    <scope>COMPLETE PLASTID GENOME</scope>
</reference>
<accession>P05724</accession>
<protein>
    <recommendedName>
        <fullName>Uncharacterized 14.4 kDa protein in 16S rRNA region</fullName>
    </recommendedName>
</protein>
<organism>
    <name type="scientific">Chlamydomonas reinhardtii</name>
    <name type="common">Chlamydomonas smithii</name>
    <dbReference type="NCBI Taxonomy" id="3055"/>
    <lineage>
        <taxon>Eukaryota</taxon>
        <taxon>Viridiplantae</taxon>
        <taxon>Chlorophyta</taxon>
        <taxon>core chlorophytes</taxon>
        <taxon>Chlorophyceae</taxon>
        <taxon>CS clade</taxon>
        <taxon>Chlamydomonadales</taxon>
        <taxon>Chlamydomonadaceae</taxon>
        <taxon>Chlamydomonas</taxon>
    </lineage>
</organism>
<geneLocation type="chloroplast"/>
<keyword id="KW-0150">Chloroplast</keyword>
<keyword id="KW-0934">Plastid</keyword>
<keyword id="KW-1185">Reference proteome</keyword>
<proteinExistence type="predicted"/>
<name>YCX3_CHLRE</name>
<comment type="subcellular location">
    <subcellularLocation>
        <location>Plastid</location>
        <location>Chloroplast</location>
    </subcellularLocation>
</comment>
<dbReference type="EMBL" id="X03269">
    <property type="protein sequence ID" value="CAC35219.1"/>
    <property type="molecule type" value="Genomic_DNA"/>
</dbReference>
<dbReference type="EMBL" id="FJ423446">
    <property type="status" value="NOT_ANNOTATED_CDS"/>
    <property type="molecule type" value="Genomic_DNA"/>
</dbReference>
<dbReference type="EMBL" id="BK000554">
    <property type="status" value="NOT_ANNOTATED_CDS"/>
    <property type="molecule type" value="Genomic_DNA"/>
</dbReference>
<dbReference type="PIR" id="S07934">
    <property type="entry name" value="S07934"/>
</dbReference>
<dbReference type="InParanoid" id="P05724"/>
<dbReference type="Proteomes" id="UP000006906">
    <property type="component" value="Chloroplast"/>
</dbReference>
<dbReference type="GO" id="GO:0009507">
    <property type="term" value="C:chloroplast"/>
    <property type="evidence" value="ECO:0007669"/>
    <property type="project" value="UniProtKB-SubCell"/>
</dbReference>
<feature type="chain" id="PRO_0000217498" description="Uncharacterized 14.4 kDa protein in 16S rRNA region">
    <location>
        <begin position="1"/>
        <end position="124"/>
    </location>
</feature>
<sequence length="124" mass="14456">MQGLEYTLEPEQAKKCKTHQLVDLAKIDLNSWSQENVRPKTLLGRTSKKRLTSQFWYEFTKKQKLKNALYYFVIYDITDNSILPVETLNQKNPLSTSFPFPFGRPLRGINFSGSCLHCLLRVLK</sequence>